<gene>
    <name evidence="1" type="primary">rpl14</name>
</gene>
<proteinExistence type="inferred from homology"/>
<feature type="chain" id="PRO_0000355856" description="Large ribosomal subunit protein uL14c">
    <location>
        <begin position="1"/>
        <end position="122"/>
    </location>
</feature>
<geneLocation type="chloroplast"/>
<protein>
    <recommendedName>
        <fullName evidence="1">Large ribosomal subunit protein uL14c</fullName>
    </recommendedName>
    <alternativeName>
        <fullName evidence="2">50S ribosomal protein L14, chloroplastic</fullName>
    </alternativeName>
</protein>
<accession>A4QJF1</accession>
<dbReference type="EMBL" id="AP009366">
    <property type="protein sequence ID" value="BAF49806.1"/>
    <property type="molecule type" value="Genomic_DNA"/>
</dbReference>
<dbReference type="RefSeq" id="YP_001122982.1">
    <property type="nucleotide sequence ID" value="NC_009265.1"/>
</dbReference>
<dbReference type="SMR" id="A4QJF1"/>
<dbReference type="GeneID" id="4968562"/>
<dbReference type="GO" id="GO:0009507">
    <property type="term" value="C:chloroplast"/>
    <property type="evidence" value="ECO:0007669"/>
    <property type="project" value="UniProtKB-SubCell"/>
</dbReference>
<dbReference type="GO" id="GO:0022625">
    <property type="term" value="C:cytosolic large ribosomal subunit"/>
    <property type="evidence" value="ECO:0007669"/>
    <property type="project" value="TreeGrafter"/>
</dbReference>
<dbReference type="GO" id="GO:0070180">
    <property type="term" value="F:large ribosomal subunit rRNA binding"/>
    <property type="evidence" value="ECO:0007669"/>
    <property type="project" value="TreeGrafter"/>
</dbReference>
<dbReference type="GO" id="GO:0003735">
    <property type="term" value="F:structural constituent of ribosome"/>
    <property type="evidence" value="ECO:0007669"/>
    <property type="project" value="InterPro"/>
</dbReference>
<dbReference type="GO" id="GO:0006412">
    <property type="term" value="P:translation"/>
    <property type="evidence" value="ECO:0007669"/>
    <property type="project" value="UniProtKB-UniRule"/>
</dbReference>
<dbReference type="CDD" id="cd00337">
    <property type="entry name" value="Ribosomal_uL14"/>
    <property type="match status" value="1"/>
</dbReference>
<dbReference type="FunFam" id="2.40.150.20:FF:000002">
    <property type="entry name" value="50S ribosomal protein L14, chloroplastic"/>
    <property type="match status" value="1"/>
</dbReference>
<dbReference type="Gene3D" id="2.40.150.20">
    <property type="entry name" value="Ribosomal protein L14"/>
    <property type="match status" value="1"/>
</dbReference>
<dbReference type="HAMAP" id="MF_01367">
    <property type="entry name" value="Ribosomal_uL14"/>
    <property type="match status" value="1"/>
</dbReference>
<dbReference type="InterPro" id="IPR000218">
    <property type="entry name" value="Ribosomal_uL14"/>
</dbReference>
<dbReference type="InterPro" id="IPR005745">
    <property type="entry name" value="Ribosomal_uL14_bac-type"/>
</dbReference>
<dbReference type="InterPro" id="IPR019972">
    <property type="entry name" value="Ribosomal_uL14_CS"/>
</dbReference>
<dbReference type="InterPro" id="IPR036853">
    <property type="entry name" value="Ribosomal_uL14_sf"/>
</dbReference>
<dbReference type="NCBIfam" id="TIGR01067">
    <property type="entry name" value="rplN_bact"/>
    <property type="match status" value="1"/>
</dbReference>
<dbReference type="PANTHER" id="PTHR11761">
    <property type="entry name" value="50S/60S RIBOSOMAL PROTEIN L14/L23"/>
    <property type="match status" value="1"/>
</dbReference>
<dbReference type="PANTHER" id="PTHR11761:SF3">
    <property type="entry name" value="LARGE RIBOSOMAL SUBUNIT PROTEIN UL14M"/>
    <property type="match status" value="1"/>
</dbReference>
<dbReference type="Pfam" id="PF00238">
    <property type="entry name" value="Ribosomal_L14"/>
    <property type="match status" value="1"/>
</dbReference>
<dbReference type="SMART" id="SM01374">
    <property type="entry name" value="Ribosomal_L14"/>
    <property type="match status" value="1"/>
</dbReference>
<dbReference type="SUPFAM" id="SSF50193">
    <property type="entry name" value="Ribosomal protein L14"/>
    <property type="match status" value="1"/>
</dbReference>
<dbReference type="PROSITE" id="PS00049">
    <property type="entry name" value="RIBOSOMAL_L14"/>
    <property type="match status" value="1"/>
</dbReference>
<name>RK14_AETCO</name>
<comment type="function">
    <text evidence="1">Binds to 23S rRNA.</text>
</comment>
<comment type="subunit">
    <text evidence="1">Part of the 50S ribosomal subunit.</text>
</comment>
<comment type="subcellular location">
    <subcellularLocation>
        <location>Plastid</location>
        <location>Chloroplast</location>
    </subcellularLocation>
</comment>
<comment type="similarity">
    <text evidence="1">Belongs to the universal ribosomal protein uL14 family.</text>
</comment>
<reference key="1">
    <citation type="submission" date="2007-03" db="EMBL/GenBank/DDBJ databases">
        <title>Sequencing analysis of Aethionema coridifolium chloroplast DNA.</title>
        <authorList>
            <person name="Hosouchi T."/>
            <person name="Tsuruoka H."/>
            <person name="Kotani H."/>
        </authorList>
    </citation>
    <scope>NUCLEOTIDE SEQUENCE [LARGE SCALE GENOMIC DNA]</scope>
</reference>
<organism>
    <name type="scientific">Aethionema cordifolium</name>
    <name type="common">Lebanon stonecress</name>
    <dbReference type="NCBI Taxonomy" id="434059"/>
    <lineage>
        <taxon>Eukaryota</taxon>
        <taxon>Viridiplantae</taxon>
        <taxon>Streptophyta</taxon>
        <taxon>Embryophyta</taxon>
        <taxon>Tracheophyta</taxon>
        <taxon>Spermatophyta</taxon>
        <taxon>Magnoliopsida</taxon>
        <taxon>eudicotyledons</taxon>
        <taxon>Gunneridae</taxon>
        <taxon>Pentapetalae</taxon>
        <taxon>rosids</taxon>
        <taxon>malvids</taxon>
        <taxon>Brassicales</taxon>
        <taxon>Brassicaceae</taxon>
        <taxon>Aethionemeae</taxon>
        <taxon>Aethionema</taxon>
    </lineage>
</organism>
<keyword id="KW-0150">Chloroplast</keyword>
<keyword id="KW-0934">Plastid</keyword>
<keyword id="KW-0687">Ribonucleoprotein</keyword>
<keyword id="KW-0689">Ribosomal protein</keyword>
<keyword id="KW-0694">RNA-binding</keyword>
<keyword id="KW-0699">rRNA-binding</keyword>
<evidence type="ECO:0000255" key="1">
    <source>
        <dbReference type="HAMAP-Rule" id="MF_01367"/>
    </source>
</evidence>
<evidence type="ECO:0000305" key="2"/>
<sequence length="122" mass="13582">MIQPQTYLNVADNSGARELMCIRIIGASNRRYAHIGDVIVAVIKEAIPNTPLERSEVIRAVIVRTCKELKRNNGTIIRYDDNAAVVIDQEGNPKGTRVFGAIPRELRQLNFTKIVSLAPEVL</sequence>